<protein>
    <recommendedName>
        <fullName evidence="1">Small ribosomal subunit protein uS11</fullName>
    </recommendedName>
    <alternativeName>
        <fullName evidence="2">30S ribosomal protein S11</fullName>
    </alternativeName>
</protein>
<evidence type="ECO:0000255" key="1">
    <source>
        <dbReference type="HAMAP-Rule" id="MF_01310"/>
    </source>
</evidence>
<evidence type="ECO:0000305" key="2"/>
<evidence type="ECO:0007829" key="3">
    <source>
        <dbReference type="PDB" id="8BYV"/>
    </source>
</evidence>
<organism>
    <name type="scientific">Staphylococcus aureus (strain NCTC 8325 / PS 47)</name>
    <dbReference type="NCBI Taxonomy" id="93061"/>
    <lineage>
        <taxon>Bacteria</taxon>
        <taxon>Bacillati</taxon>
        <taxon>Bacillota</taxon>
        <taxon>Bacilli</taxon>
        <taxon>Bacillales</taxon>
        <taxon>Staphylococcaceae</taxon>
        <taxon>Staphylococcus</taxon>
    </lineage>
</organism>
<dbReference type="EMBL" id="CP000253">
    <property type="protein sequence ID" value="ABD31505.1"/>
    <property type="molecule type" value="Genomic_DNA"/>
</dbReference>
<dbReference type="RefSeq" id="WP_000101625.1">
    <property type="nucleotide sequence ID" value="NZ_LS483365.1"/>
</dbReference>
<dbReference type="RefSeq" id="YP_500954.1">
    <property type="nucleotide sequence ID" value="NC_007795.1"/>
</dbReference>
<dbReference type="PDB" id="5LI0">
    <property type="method" value="EM"/>
    <property type="resolution" value="3.80 A"/>
    <property type="chains" value="k=10-127"/>
</dbReference>
<dbReference type="PDB" id="5ND8">
    <property type="method" value="EM"/>
    <property type="resolution" value="3.70 A"/>
    <property type="chains" value="k=1-129"/>
</dbReference>
<dbReference type="PDB" id="5ND9">
    <property type="method" value="EM"/>
    <property type="resolution" value="3.70 A"/>
    <property type="chains" value="k=1-129"/>
</dbReference>
<dbReference type="PDB" id="5TCU">
    <property type="method" value="EM"/>
    <property type="resolution" value="3.90 A"/>
    <property type="chains" value="S2=15-128"/>
</dbReference>
<dbReference type="PDB" id="6YEF">
    <property type="method" value="EM"/>
    <property type="resolution" value="3.20 A"/>
    <property type="chains" value="k=1-129"/>
</dbReference>
<dbReference type="PDB" id="7BGD">
    <property type="method" value="EM"/>
    <property type="resolution" value="3.20 A"/>
    <property type="chains" value="k=1-129"/>
</dbReference>
<dbReference type="PDB" id="7KWG">
    <property type="method" value="EM"/>
    <property type="resolution" value="3.75 A"/>
    <property type="chains" value="k=1-129"/>
</dbReference>
<dbReference type="PDB" id="7NHL">
    <property type="method" value="EM"/>
    <property type="resolution" value="3.10 A"/>
    <property type="chains" value="l=1-129"/>
</dbReference>
<dbReference type="PDB" id="7NHM">
    <property type="method" value="EM"/>
    <property type="resolution" value="3.10 A"/>
    <property type="chains" value="l=1-129"/>
</dbReference>
<dbReference type="PDB" id="8BH6">
    <property type="method" value="EM"/>
    <property type="resolution" value="3.70 A"/>
    <property type="chains" value="k=1-129"/>
</dbReference>
<dbReference type="PDB" id="8BH7">
    <property type="method" value="EM"/>
    <property type="resolution" value="4.23 A"/>
    <property type="chains" value="k=1-129"/>
</dbReference>
<dbReference type="PDB" id="8BYV">
    <property type="method" value="EM"/>
    <property type="resolution" value="2.89 A"/>
    <property type="chains" value="k=1-129"/>
</dbReference>
<dbReference type="PDB" id="8P2F">
    <property type="method" value="EM"/>
    <property type="resolution" value="2.44 A"/>
    <property type="chains" value="l=1-129"/>
</dbReference>
<dbReference type="PDB" id="8P2G">
    <property type="method" value="EM"/>
    <property type="resolution" value="2.02 A"/>
    <property type="chains" value="l=1-129"/>
</dbReference>
<dbReference type="PDB" id="8P2H">
    <property type="method" value="EM"/>
    <property type="resolution" value="2.49 A"/>
    <property type="chains" value="l=1-129"/>
</dbReference>
<dbReference type="PDBsum" id="5LI0"/>
<dbReference type="PDBsum" id="5ND8"/>
<dbReference type="PDBsum" id="5ND9"/>
<dbReference type="PDBsum" id="5TCU"/>
<dbReference type="PDBsum" id="6YEF"/>
<dbReference type="PDBsum" id="7BGD"/>
<dbReference type="PDBsum" id="7KWG"/>
<dbReference type="PDBsum" id="7NHL"/>
<dbReference type="PDBsum" id="7NHM"/>
<dbReference type="PDBsum" id="8BH6"/>
<dbReference type="PDBsum" id="8BH7"/>
<dbReference type="PDBsum" id="8BYV"/>
<dbReference type="PDBsum" id="8P2F"/>
<dbReference type="PDBsum" id="8P2G"/>
<dbReference type="PDBsum" id="8P2H"/>
<dbReference type="EMDB" id="EMD-10791"/>
<dbReference type="EMDB" id="EMD-12178"/>
<dbReference type="EMDB" id="EMD-12332"/>
<dbReference type="EMDB" id="EMD-12333"/>
<dbReference type="EMDB" id="EMD-16048"/>
<dbReference type="EMDB" id="EMD-16049"/>
<dbReference type="EMDB" id="EMD-16334"/>
<dbReference type="EMDB" id="EMD-17363"/>
<dbReference type="EMDB" id="EMD-17364"/>
<dbReference type="EMDB" id="EMD-17365"/>
<dbReference type="EMDB" id="EMD-23052"/>
<dbReference type="EMDB" id="EMD-3624"/>
<dbReference type="EMDB" id="EMD-3625"/>
<dbReference type="EMDB" id="EMD-4050"/>
<dbReference type="EMDB" id="EMD-8402"/>
<dbReference type="SMR" id="Q2FW31"/>
<dbReference type="IntAct" id="Q2FW31">
    <property type="interactions" value="1"/>
</dbReference>
<dbReference type="STRING" id="93061.SAOUHSC_02486"/>
<dbReference type="PaxDb" id="1280-SAXN108_2475"/>
<dbReference type="GeneID" id="3920863"/>
<dbReference type="GeneID" id="98346537"/>
<dbReference type="KEGG" id="sao:SAOUHSC_02486"/>
<dbReference type="PATRIC" id="fig|93061.5.peg.2242"/>
<dbReference type="eggNOG" id="COG0100">
    <property type="taxonomic scope" value="Bacteria"/>
</dbReference>
<dbReference type="HOGENOM" id="CLU_072439_5_0_9"/>
<dbReference type="OrthoDB" id="9806415at2"/>
<dbReference type="PRO" id="PR:Q2FW31"/>
<dbReference type="Proteomes" id="UP000008816">
    <property type="component" value="Chromosome"/>
</dbReference>
<dbReference type="GO" id="GO:0022627">
    <property type="term" value="C:cytosolic small ribosomal subunit"/>
    <property type="evidence" value="ECO:0000318"/>
    <property type="project" value="GO_Central"/>
</dbReference>
<dbReference type="GO" id="GO:0019843">
    <property type="term" value="F:rRNA binding"/>
    <property type="evidence" value="ECO:0007669"/>
    <property type="project" value="UniProtKB-UniRule"/>
</dbReference>
<dbReference type="GO" id="GO:0003735">
    <property type="term" value="F:structural constituent of ribosome"/>
    <property type="evidence" value="ECO:0000318"/>
    <property type="project" value="GO_Central"/>
</dbReference>
<dbReference type="GO" id="GO:0006412">
    <property type="term" value="P:translation"/>
    <property type="evidence" value="ECO:0000318"/>
    <property type="project" value="GO_Central"/>
</dbReference>
<dbReference type="FunFam" id="3.30.420.80:FF:000001">
    <property type="entry name" value="30S ribosomal protein S11"/>
    <property type="match status" value="1"/>
</dbReference>
<dbReference type="Gene3D" id="3.30.420.80">
    <property type="entry name" value="Ribosomal protein S11"/>
    <property type="match status" value="1"/>
</dbReference>
<dbReference type="HAMAP" id="MF_01310">
    <property type="entry name" value="Ribosomal_uS11"/>
    <property type="match status" value="1"/>
</dbReference>
<dbReference type="InterPro" id="IPR001971">
    <property type="entry name" value="Ribosomal_uS11"/>
</dbReference>
<dbReference type="InterPro" id="IPR019981">
    <property type="entry name" value="Ribosomal_uS11_bac-type"/>
</dbReference>
<dbReference type="InterPro" id="IPR018102">
    <property type="entry name" value="Ribosomal_uS11_CS"/>
</dbReference>
<dbReference type="InterPro" id="IPR036967">
    <property type="entry name" value="Ribosomal_uS11_sf"/>
</dbReference>
<dbReference type="NCBIfam" id="NF003698">
    <property type="entry name" value="PRK05309.1"/>
    <property type="match status" value="1"/>
</dbReference>
<dbReference type="NCBIfam" id="TIGR03632">
    <property type="entry name" value="uS11_bact"/>
    <property type="match status" value="1"/>
</dbReference>
<dbReference type="PANTHER" id="PTHR11759">
    <property type="entry name" value="40S RIBOSOMAL PROTEIN S14/30S RIBOSOMAL PROTEIN S11"/>
    <property type="match status" value="1"/>
</dbReference>
<dbReference type="Pfam" id="PF00411">
    <property type="entry name" value="Ribosomal_S11"/>
    <property type="match status" value="1"/>
</dbReference>
<dbReference type="PIRSF" id="PIRSF002131">
    <property type="entry name" value="Ribosomal_S11"/>
    <property type="match status" value="1"/>
</dbReference>
<dbReference type="SUPFAM" id="SSF53137">
    <property type="entry name" value="Translational machinery components"/>
    <property type="match status" value="1"/>
</dbReference>
<dbReference type="PROSITE" id="PS00054">
    <property type="entry name" value="RIBOSOMAL_S11"/>
    <property type="match status" value="1"/>
</dbReference>
<keyword id="KW-0002">3D-structure</keyword>
<keyword id="KW-1185">Reference proteome</keyword>
<keyword id="KW-0687">Ribonucleoprotein</keyword>
<keyword id="KW-0689">Ribosomal protein</keyword>
<keyword id="KW-0694">RNA-binding</keyword>
<keyword id="KW-0699">rRNA-binding</keyword>
<comment type="function">
    <text evidence="1">Located on the platform of the 30S subunit, it bridges several disparate RNA helices of the 16S rRNA. Forms part of the Shine-Dalgarno cleft in the 70S ribosome.</text>
</comment>
<comment type="subunit">
    <text evidence="1">Part of the 30S ribosomal subunit. Interacts with proteins S7 and S18. Binds to IF-3.</text>
</comment>
<comment type="similarity">
    <text evidence="1">Belongs to the universal ribosomal protein uS11 family.</text>
</comment>
<reference key="1">
    <citation type="book" date="2006" name="Gram positive pathogens, 2nd edition">
        <title>The Staphylococcus aureus NCTC 8325 genome.</title>
        <editorList>
            <person name="Fischetti V."/>
            <person name="Novick R."/>
            <person name="Ferretti J."/>
            <person name="Portnoy D."/>
            <person name="Rood J."/>
        </editorList>
        <authorList>
            <person name="Gillaspy A.F."/>
            <person name="Worrell V."/>
            <person name="Orvis J."/>
            <person name="Roe B.A."/>
            <person name="Dyer D.W."/>
            <person name="Iandolo J.J."/>
        </authorList>
    </citation>
    <scope>NUCLEOTIDE SEQUENCE [LARGE SCALE GENOMIC DNA]</scope>
    <source>
        <strain>NCTC 8325 / PS 47</strain>
    </source>
</reference>
<gene>
    <name evidence="1" type="primary">rpsK</name>
    <name type="ordered locus">SAOUHSC_02486</name>
</gene>
<name>RS11_STAA8</name>
<accession>Q2FW31</accession>
<sequence>MARKQVSRKRRVKKNIENGVAHIRSTFNNTIVTITDEFGNALSWSSAGALGFKGSKKSTPFAAQMASETASKSAMEHGLKTVEVTVKGPGPGRESAIRALQSAGLEVTAIRDVTPVPHNGCRPPKRRRV</sequence>
<proteinExistence type="evidence at protein level"/>
<feature type="chain" id="PRO_0000294861" description="Small ribosomal subunit protein uS11">
    <location>
        <begin position="1"/>
        <end position="129"/>
    </location>
</feature>
<feature type="strand" evidence="3">
    <location>
        <begin position="17"/>
        <end position="25"/>
    </location>
</feature>
<feature type="strand" evidence="3">
    <location>
        <begin position="30"/>
        <end position="38"/>
    </location>
</feature>
<feature type="strand" evidence="3">
    <location>
        <begin position="43"/>
        <end position="46"/>
    </location>
</feature>
<feature type="turn" evidence="3">
    <location>
        <begin position="47"/>
        <end position="51"/>
    </location>
</feature>
<feature type="helix" evidence="3">
    <location>
        <begin position="55"/>
        <end position="58"/>
    </location>
</feature>
<feature type="helix" evidence="3">
    <location>
        <begin position="60"/>
        <end position="76"/>
    </location>
</feature>
<feature type="strand" evidence="3">
    <location>
        <begin position="84"/>
        <end position="88"/>
    </location>
</feature>
<feature type="helix" evidence="3">
    <location>
        <begin position="96"/>
        <end position="102"/>
    </location>
</feature>
<feature type="strand" evidence="3">
    <location>
        <begin position="110"/>
        <end position="112"/>
    </location>
</feature>